<protein>
    <recommendedName>
        <fullName evidence="1">ATP synthase gamma chain</fullName>
    </recommendedName>
    <alternativeName>
        <fullName evidence="1">ATP synthase F1 sector gamma subunit</fullName>
    </alternativeName>
    <alternativeName>
        <fullName evidence="1">F-ATPase gamma subunit</fullName>
    </alternativeName>
</protein>
<accession>B2UNX5</accession>
<dbReference type="EMBL" id="CP001071">
    <property type="protein sequence ID" value="ACD04345.1"/>
    <property type="molecule type" value="Genomic_DNA"/>
</dbReference>
<dbReference type="RefSeq" id="WP_012419560.1">
    <property type="nucleotide sequence ID" value="NZ_CP071807.1"/>
</dbReference>
<dbReference type="SMR" id="B2UNX5"/>
<dbReference type="STRING" id="349741.Amuc_0507"/>
<dbReference type="PaxDb" id="349741-Amuc_0507"/>
<dbReference type="GeneID" id="60879976"/>
<dbReference type="KEGG" id="amu:Amuc_0507"/>
<dbReference type="eggNOG" id="COG0224">
    <property type="taxonomic scope" value="Bacteria"/>
</dbReference>
<dbReference type="HOGENOM" id="CLU_050669_0_1_0"/>
<dbReference type="OrthoDB" id="9812769at2"/>
<dbReference type="BioCyc" id="AMUC349741:G1GBX-556-MONOMER"/>
<dbReference type="Proteomes" id="UP000001031">
    <property type="component" value="Chromosome"/>
</dbReference>
<dbReference type="GO" id="GO:0005886">
    <property type="term" value="C:plasma membrane"/>
    <property type="evidence" value="ECO:0007669"/>
    <property type="project" value="UniProtKB-SubCell"/>
</dbReference>
<dbReference type="GO" id="GO:0045259">
    <property type="term" value="C:proton-transporting ATP synthase complex"/>
    <property type="evidence" value="ECO:0007669"/>
    <property type="project" value="UniProtKB-KW"/>
</dbReference>
<dbReference type="GO" id="GO:0005524">
    <property type="term" value="F:ATP binding"/>
    <property type="evidence" value="ECO:0007669"/>
    <property type="project" value="UniProtKB-UniRule"/>
</dbReference>
<dbReference type="GO" id="GO:0046933">
    <property type="term" value="F:proton-transporting ATP synthase activity, rotational mechanism"/>
    <property type="evidence" value="ECO:0007669"/>
    <property type="project" value="UniProtKB-UniRule"/>
</dbReference>
<dbReference type="GO" id="GO:0042777">
    <property type="term" value="P:proton motive force-driven plasma membrane ATP synthesis"/>
    <property type="evidence" value="ECO:0007669"/>
    <property type="project" value="UniProtKB-UniRule"/>
</dbReference>
<dbReference type="CDD" id="cd12151">
    <property type="entry name" value="F1-ATPase_gamma"/>
    <property type="match status" value="1"/>
</dbReference>
<dbReference type="FunFam" id="1.10.287.80:FF:000003">
    <property type="entry name" value="ATP synthase gamma chain, chloroplastic"/>
    <property type="match status" value="1"/>
</dbReference>
<dbReference type="Gene3D" id="3.40.1380.10">
    <property type="match status" value="1"/>
</dbReference>
<dbReference type="Gene3D" id="1.10.287.80">
    <property type="entry name" value="ATP synthase, gamma subunit, helix hairpin domain"/>
    <property type="match status" value="1"/>
</dbReference>
<dbReference type="HAMAP" id="MF_00815">
    <property type="entry name" value="ATP_synth_gamma_bact"/>
    <property type="match status" value="1"/>
</dbReference>
<dbReference type="InterPro" id="IPR035968">
    <property type="entry name" value="ATP_synth_F1_ATPase_gsu"/>
</dbReference>
<dbReference type="InterPro" id="IPR000131">
    <property type="entry name" value="ATP_synth_F1_gsu"/>
</dbReference>
<dbReference type="NCBIfam" id="TIGR01146">
    <property type="entry name" value="ATPsyn_F1gamma"/>
    <property type="match status" value="1"/>
</dbReference>
<dbReference type="PANTHER" id="PTHR11693">
    <property type="entry name" value="ATP SYNTHASE GAMMA CHAIN"/>
    <property type="match status" value="1"/>
</dbReference>
<dbReference type="PANTHER" id="PTHR11693:SF22">
    <property type="entry name" value="ATP SYNTHASE SUBUNIT GAMMA, MITOCHONDRIAL"/>
    <property type="match status" value="1"/>
</dbReference>
<dbReference type="Pfam" id="PF00231">
    <property type="entry name" value="ATP-synt"/>
    <property type="match status" value="1"/>
</dbReference>
<dbReference type="PRINTS" id="PR00126">
    <property type="entry name" value="ATPASEGAMMA"/>
</dbReference>
<dbReference type="SUPFAM" id="SSF52943">
    <property type="entry name" value="ATP synthase (F1-ATPase), gamma subunit"/>
    <property type="match status" value="1"/>
</dbReference>
<reference key="1">
    <citation type="journal article" date="2011" name="PLoS ONE">
        <title>The genome of Akkermansia muciniphila, a dedicated intestinal mucin degrader, and its use in exploring intestinal metagenomes.</title>
        <authorList>
            <person name="van Passel M.W."/>
            <person name="Kant R."/>
            <person name="Zoetendal E.G."/>
            <person name="Plugge C.M."/>
            <person name="Derrien M."/>
            <person name="Malfatti S.A."/>
            <person name="Chain P.S."/>
            <person name="Woyke T."/>
            <person name="Palva A."/>
            <person name="de Vos W.M."/>
            <person name="Smidt H."/>
        </authorList>
    </citation>
    <scope>NUCLEOTIDE SEQUENCE [LARGE SCALE GENOMIC DNA]</scope>
    <source>
        <strain>ATCC BAA-835 / DSM 22959 / JCM 33894 / BCRC 81048 / CCUG 64013 / CIP 107961 / Muc</strain>
    </source>
</reference>
<gene>
    <name evidence="1" type="primary">atpG</name>
    <name type="ordered locus">Amuc_0507</name>
</gene>
<proteinExistence type="inferred from homology"/>
<keyword id="KW-0066">ATP synthesis</keyword>
<keyword id="KW-1003">Cell membrane</keyword>
<keyword id="KW-0139">CF(1)</keyword>
<keyword id="KW-0375">Hydrogen ion transport</keyword>
<keyword id="KW-0406">Ion transport</keyword>
<keyword id="KW-0472">Membrane</keyword>
<keyword id="KW-1185">Reference proteome</keyword>
<keyword id="KW-0813">Transport</keyword>
<feature type="chain" id="PRO_1000134102" description="ATP synthase gamma chain">
    <location>
        <begin position="1"/>
        <end position="290"/>
    </location>
</feature>
<sequence length="290" mass="32196">MGNLRDIRRRIKSVKNTSQITRAMQMVASAKMRRAQDQAVKGRPYIRALAEVLYHLQDEIDTSNSPLMQTHGGADLVLLVNTDRGLCGGLNANLIKMVREQAPENAHYITIGRKLNAALAKLNERLEATWSLTDPLSLLELKPVFDFIVQKFKAEEYGRVFVAFSGFVNTMVQKPVFRQLLPIEPEPLMNMAKAGGSSLDGADAHKQFLLEPSPAALLDTILPLYVFHGLVQIVLEARASEHSARMVAMKGATENAKNIIGGLTLDYNKARQTQITNELLEITTAMRAME</sequence>
<organism>
    <name type="scientific">Akkermansia muciniphila (strain ATCC BAA-835 / DSM 22959 / JCM 33894 / BCRC 81048 / CCUG 64013 / CIP 107961 / Muc)</name>
    <dbReference type="NCBI Taxonomy" id="349741"/>
    <lineage>
        <taxon>Bacteria</taxon>
        <taxon>Pseudomonadati</taxon>
        <taxon>Verrucomicrobiota</taxon>
        <taxon>Verrucomicrobiia</taxon>
        <taxon>Verrucomicrobiales</taxon>
        <taxon>Akkermansiaceae</taxon>
        <taxon>Akkermansia</taxon>
    </lineage>
</organism>
<name>ATPG_AKKM8</name>
<comment type="function">
    <text evidence="1">Produces ATP from ADP in the presence of a proton gradient across the membrane. The gamma chain is believed to be important in regulating ATPase activity and the flow of protons through the CF(0) complex.</text>
</comment>
<comment type="subunit">
    <text evidence="1">F-type ATPases have 2 components, CF(1) - the catalytic core - and CF(0) - the membrane proton channel. CF(1) has five subunits: alpha(3), beta(3), gamma(1), delta(1), epsilon(1). CF(0) has three main subunits: a, b and c.</text>
</comment>
<comment type="subcellular location">
    <subcellularLocation>
        <location evidence="1">Cell membrane</location>
        <topology evidence="1">Peripheral membrane protein</topology>
    </subcellularLocation>
</comment>
<comment type="similarity">
    <text evidence="1">Belongs to the ATPase gamma chain family.</text>
</comment>
<evidence type="ECO:0000255" key="1">
    <source>
        <dbReference type="HAMAP-Rule" id="MF_00815"/>
    </source>
</evidence>